<gene>
    <name evidence="1" type="primary">mraY</name>
    <name type="ordered locus">BCAH187_A3966</name>
</gene>
<comment type="function">
    <text evidence="1">Catalyzes the initial step of the lipid cycle reactions in the biosynthesis of the cell wall peptidoglycan: transfers peptidoglycan precursor phospho-MurNAc-pentapeptide from UDP-MurNAc-pentapeptide onto the lipid carrier undecaprenyl phosphate, yielding undecaprenyl-pyrophosphoryl-MurNAc-pentapeptide, known as lipid I.</text>
</comment>
<comment type="catalytic activity">
    <reaction evidence="1">
        <text>UDP-N-acetyl-alpha-D-muramoyl-L-alanyl-gamma-D-glutamyl-meso-2,6-diaminopimeloyl-D-alanyl-D-alanine + di-trans,octa-cis-undecaprenyl phosphate = di-trans,octa-cis-undecaprenyl diphospho-N-acetyl-alpha-D-muramoyl-L-alanyl-D-glutamyl-meso-2,6-diaminopimeloyl-D-alanyl-D-alanine + UMP</text>
        <dbReference type="Rhea" id="RHEA:28386"/>
        <dbReference type="ChEBI" id="CHEBI:57865"/>
        <dbReference type="ChEBI" id="CHEBI:60392"/>
        <dbReference type="ChEBI" id="CHEBI:61386"/>
        <dbReference type="ChEBI" id="CHEBI:61387"/>
        <dbReference type="EC" id="2.7.8.13"/>
    </reaction>
</comment>
<comment type="cofactor">
    <cofactor evidence="1">
        <name>Mg(2+)</name>
        <dbReference type="ChEBI" id="CHEBI:18420"/>
    </cofactor>
</comment>
<comment type="pathway">
    <text evidence="1">Cell wall biogenesis; peptidoglycan biosynthesis.</text>
</comment>
<comment type="subcellular location">
    <subcellularLocation>
        <location evidence="1">Cell membrane</location>
        <topology evidence="1">Multi-pass membrane protein</topology>
    </subcellularLocation>
</comment>
<comment type="similarity">
    <text evidence="1">Belongs to the glycosyltransferase 4 family. MraY subfamily.</text>
</comment>
<reference key="1">
    <citation type="submission" date="2008-10" db="EMBL/GenBank/DDBJ databases">
        <title>Genome sequence of Bacillus cereus AH187.</title>
        <authorList>
            <person name="Dodson R.J."/>
            <person name="Durkin A.S."/>
            <person name="Rosovitz M.J."/>
            <person name="Rasko D.A."/>
            <person name="Kolsto A.B."/>
            <person name="Okstad O.A."/>
            <person name="Ravel J."/>
            <person name="Sutton G."/>
        </authorList>
    </citation>
    <scope>NUCLEOTIDE SEQUENCE [LARGE SCALE GENOMIC DNA]</scope>
    <source>
        <strain>AH187</strain>
    </source>
</reference>
<name>MRAY_BACC7</name>
<proteinExistence type="inferred from homology"/>
<organism>
    <name type="scientific">Bacillus cereus (strain AH187)</name>
    <dbReference type="NCBI Taxonomy" id="405534"/>
    <lineage>
        <taxon>Bacteria</taxon>
        <taxon>Bacillati</taxon>
        <taxon>Bacillota</taxon>
        <taxon>Bacilli</taxon>
        <taxon>Bacillales</taxon>
        <taxon>Bacillaceae</taxon>
        <taxon>Bacillus</taxon>
        <taxon>Bacillus cereus group</taxon>
    </lineage>
</organism>
<feature type="chain" id="PRO_1000116506" description="Phospho-N-acetylmuramoyl-pentapeptide-transferase">
    <location>
        <begin position="1"/>
        <end position="324"/>
    </location>
</feature>
<feature type="transmembrane region" description="Helical" evidence="1">
    <location>
        <begin position="5"/>
        <end position="25"/>
    </location>
</feature>
<feature type="transmembrane region" description="Helical" evidence="1">
    <location>
        <begin position="52"/>
        <end position="72"/>
    </location>
</feature>
<feature type="transmembrane region" description="Helical" evidence="1">
    <location>
        <begin position="77"/>
        <end position="97"/>
    </location>
</feature>
<feature type="transmembrane region" description="Helical" evidence="1">
    <location>
        <begin position="122"/>
        <end position="142"/>
    </location>
</feature>
<feature type="transmembrane region" description="Helical" evidence="1">
    <location>
        <begin position="149"/>
        <end position="169"/>
    </location>
</feature>
<feature type="transmembrane region" description="Helical" evidence="1">
    <location>
        <begin position="176"/>
        <end position="196"/>
    </location>
</feature>
<feature type="transmembrane region" description="Helical" evidence="1">
    <location>
        <begin position="201"/>
        <end position="221"/>
    </location>
</feature>
<feature type="transmembrane region" description="Helical" evidence="1">
    <location>
        <begin position="227"/>
        <end position="247"/>
    </location>
</feature>
<feature type="transmembrane region" description="Helical" evidence="1">
    <location>
        <begin position="253"/>
        <end position="273"/>
    </location>
</feature>
<feature type="transmembrane region" description="Helical" evidence="1">
    <location>
        <begin position="302"/>
        <end position="322"/>
    </location>
</feature>
<dbReference type="EC" id="2.7.8.13" evidence="1"/>
<dbReference type="EMBL" id="CP001177">
    <property type="protein sequence ID" value="ACJ80703.1"/>
    <property type="molecule type" value="Genomic_DNA"/>
</dbReference>
<dbReference type="SMR" id="B7HM34"/>
<dbReference type="KEGG" id="bcr:BCAH187_A3966"/>
<dbReference type="HOGENOM" id="CLU_023982_0_1_9"/>
<dbReference type="UniPathway" id="UPA00219"/>
<dbReference type="Proteomes" id="UP000002214">
    <property type="component" value="Chromosome"/>
</dbReference>
<dbReference type="GO" id="GO:0005886">
    <property type="term" value="C:plasma membrane"/>
    <property type="evidence" value="ECO:0007669"/>
    <property type="project" value="UniProtKB-SubCell"/>
</dbReference>
<dbReference type="GO" id="GO:0046872">
    <property type="term" value="F:metal ion binding"/>
    <property type="evidence" value="ECO:0007669"/>
    <property type="project" value="UniProtKB-KW"/>
</dbReference>
<dbReference type="GO" id="GO:0008963">
    <property type="term" value="F:phospho-N-acetylmuramoyl-pentapeptide-transferase activity"/>
    <property type="evidence" value="ECO:0007669"/>
    <property type="project" value="UniProtKB-UniRule"/>
</dbReference>
<dbReference type="GO" id="GO:0051992">
    <property type="term" value="F:UDP-N-acetylmuramoyl-L-alanyl-D-glutamyl-meso-2,6-diaminopimelyl-D-alanyl-D-alanine:undecaprenyl-phosphate transferase activity"/>
    <property type="evidence" value="ECO:0007669"/>
    <property type="project" value="RHEA"/>
</dbReference>
<dbReference type="GO" id="GO:0051301">
    <property type="term" value="P:cell division"/>
    <property type="evidence" value="ECO:0007669"/>
    <property type="project" value="UniProtKB-KW"/>
</dbReference>
<dbReference type="GO" id="GO:0071555">
    <property type="term" value="P:cell wall organization"/>
    <property type="evidence" value="ECO:0007669"/>
    <property type="project" value="UniProtKB-KW"/>
</dbReference>
<dbReference type="GO" id="GO:0009252">
    <property type="term" value="P:peptidoglycan biosynthetic process"/>
    <property type="evidence" value="ECO:0007669"/>
    <property type="project" value="UniProtKB-UniRule"/>
</dbReference>
<dbReference type="GO" id="GO:0008360">
    <property type="term" value="P:regulation of cell shape"/>
    <property type="evidence" value="ECO:0007669"/>
    <property type="project" value="UniProtKB-KW"/>
</dbReference>
<dbReference type="CDD" id="cd06852">
    <property type="entry name" value="GT_MraY"/>
    <property type="match status" value="1"/>
</dbReference>
<dbReference type="HAMAP" id="MF_00038">
    <property type="entry name" value="MraY"/>
    <property type="match status" value="1"/>
</dbReference>
<dbReference type="InterPro" id="IPR000715">
    <property type="entry name" value="Glycosyl_transferase_4"/>
</dbReference>
<dbReference type="InterPro" id="IPR003524">
    <property type="entry name" value="PNAcMuramoyl-5peptid_Trfase"/>
</dbReference>
<dbReference type="InterPro" id="IPR018480">
    <property type="entry name" value="PNAcMuramoyl-5peptid_Trfase_CS"/>
</dbReference>
<dbReference type="NCBIfam" id="TIGR00445">
    <property type="entry name" value="mraY"/>
    <property type="match status" value="1"/>
</dbReference>
<dbReference type="PANTHER" id="PTHR22926">
    <property type="entry name" value="PHOSPHO-N-ACETYLMURAMOYL-PENTAPEPTIDE-TRANSFERASE"/>
    <property type="match status" value="1"/>
</dbReference>
<dbReference type="PANTHER" id="PTHR22926:SF5">
    <property type="entry name" value="PHOSPHO-N-ACETYLMURAMOYL-PENTAPEPTIDE-TRANSFERASE HOMOLOG"/>
    <property type="match status" value="1"/>
</dbReference>
<dbReference type="Pfam" id="PF00953">
    <property type="entry name" value="Glycos_transf_4"/>
    <property type="match status" value="1"/>
</dbReference>
<dbReference type="Pfam" id="PF10555">
    <property type="entry name" value="MraY_sig1"/>
    <property type="match status" value="1"/>
</dbReference>
<dbReference type="PROSITE" id="PS01348">
    <property type="entry name" value="MRAY_2"/>
    <property type="match status" value="1"/>
</dbReference>
<sequence length="324" mass="34906">MLEQGLLVTAGVAFLISVALSPLFIPFLRKLKFGQSIRDEGPKSHQKKSGTPTMGGIVIYVSMMVTSLIMAIKFNHLGAEVSLLLLVTFGYGLIGFLDDYIKVVKKRNLGLTSKQKLVGQLVIAIAFFLIGKGQAFHTYIMIPGTDVKFELGWAYFVLVLFMLIGGSNAVNLTDGLDGLLSGTAAIAFGAFSIIAVAQEQFGVAIFCMAVVGAVLGFLVFNANPAKVFMGDTGSLALGGAIAAVAILLKQELLLVIIGGVFVMETLSVIIQVISFKTTGKRVFKMSPLHHHYELCGWSEWRVVVTFWSVGFLLAVLGIYIGVWM</sequence>
<keyword id="KW-0131">Cell cycle</keyword>
<keyword id="KW-0132">Cell division</keyword>
<keyword id="KW-1003">Cell membrane</keyword>
<keyword id="KW-0133">Cell shape</keyword>
<keyword id="KW-0961">Cell wall biogenesis/degradation</keyword>
<keyword id="KW-0460">Magnesium</keyword>
<keyword id="KW-0472">Membrane</keyword>
<keyword id="KW-0479">Metal-binding</keyword>
<keyword id="KW-0573">Peptidoglycan synthesis</keyword>
<keyword id="KW-0808">Transferase</keyword>
<keyword id="KW-0812">Transmembrane</keyword>
<keyword id="KW-1133">Transmembrane helix</keyword>
<accession>B7HM34</accession>
<protein>
    <recommendedName>
        <fullName evidence="1">Phospho-N-acetylmuramoyl-pentapeptide-transferase</fullName>
        <ecNumber evidence="1">2.7.8.13</ecNumber>
    </recommendedName>
    <alternativeName>
        <fullName evidence="1">UDP-MurNAc-pentapeptide phosphotransferase</fullName>
    </alternativeName>
</protein>
<evidence type="ECO:0000255" key="1">
    <source>
        <dbReference type="HAMAP-Rule" id="MF_00038"/>
    </source>
</evidence>